<protein>
    <recommendedName>
        <fullName evidence="1">Photosystem II reaction center protein L</fullName>
        <shortName evidence="1">PSII-L</shortName>
    </recommendedName>
</protein>
<sequence length="38" mass="4361">MSGPNPNKQPVELNRTSLFWGLLLIFVLAVLFSSYFFN</sequence>
<geneLocation type="chloroplast"/>
<keyword id="KW-0002">3D-structure</keyword>
<keyword id="KW-0150">Chloroplast</keyword>
<keyword id="KW-0472">Membrane</keyword>
<keyword id="KW-0602">Photosynthesis</keyword>
<keyword id="KW-0604">Photosystem II</keyword>
<keyword id="KW-0934">Plastid</keyword>
<keyword id="KW-0674">Reaction center</keyword>
<keyword id="KW-0793">Thylakoid</keyword>
<keyword id="KW-0812">Transmembrane</keyword>
<keyword id="KW-1133">Transmembrane helix</keyword>
<name>PSBL_RHDSA</name>
<organism>
    <name type="scientific">Rhodomonas salina</name>
    <name type="common">Cryptomonas salina</name>
    <dbReference type="NCBI Taxonomy" id="52970"/>
    <lineage>
        <taxon>Eukaryota</taxon>
        <taxon>Cryptophyceae</taxon>
        <taxon>Pyrenomonadales</taxon>
        <taxon>Pyrenomonadaceae</taxon>
        <taxon>Rhodomonas</taxon>
    </lineage>
</organism>
<dbReference type="EMBL" id="EF508371">
    <property type="protein sequence ID" value="ABO70829.1"/>
    <property type="molecule type" value="Genomic_DNA"/>
</dbReference>
<dbReference type="RefSeq" id="YP_001293532.1">
    <property type="nucleotide sequence ID" value="NC_009573.1"/>
</dbReference>
<dbReference type="PDB" id="8XLP">
    <property type="method" value="EM"/>
    <property type="resolution" value="2.57 A"/>
    <property type="chains" value="L/l=1-38"/>
</dbReference>
<dbReference type="PDBsum" id="8XLP"/>
<dbReference type="EMDB" id="EMD-38455"/>
<dbReference type="SMR" id="A6MVV3"/>
<dbReference type="GeneID" id="5228525"/>
<dbReference type="GO" id="GO:0009535">
    <property type="term" value="C:chloroplast thylakoid membrane"/>
    <property type="evidence" value="ECO:0007669"/>
    <property type="project" value="UniProtKB-SubCell"/>
</dbReference>
<dbReference type="GO" id="GO:0009539">
    <property type="term" value="C:photosystem II reaction center"/>
    <property type="evidence" value="ECO:0007669"/>
    <property type="project" value="InterPro"/>
</dbReference>
<dbReference type="GO" id="GO:0015979">
    <property type="term" value="P:photosynthesis"/>
    <property type="evidence" value="ECO:0007669"/>
    <property type="project" value="UniProtKB-UniRule"/>
</dbReference>
<dbReference type="HAMAP" id="MF_01317">
    <property type="entry name" value="PSII_PsbL"/>
    <property type="match status" value="1"/>
</dbReference>
<dbReference type="InterPro" id="IPR003372">
    <property type="entry name" value="PSII_PsbL"/>
</dbReference>
<dbReference type="InterPro" id="IPR037266">
    <property type="entry name" value="PSII_PsbL_sf"/>
</dbReference>
<dbReference type="NCBIfam" id="NF001972">
    <property type="entry name" value="PRK00753.1"/>
    <property type="match status" value="1"/>
</dbReference>
<dbReference type="Pfam" id="PF02419">
    <property type="entry name" value="PsbL"/>
    <property type="match status" value="1"/>
</dbReference>
<dbReference type="SUPFAM" id="SSF161017">
    <property type="entry name" value="Photosystem II reaction center protein L, PsbL"/>
    <property type="match status" value="1"/>
</dbReference>
<feature type="chain" id="PRO_0000306244" description="Photosystem II reaction center protein L">
    <location>
        <begin position="1"/>
        <end position="38"/>
    </location>
</feature>
<feature type="transmembrane region" description="Helical" evidence="1">
    <location>
        <begin position="17"/>
        <end position="37"/>
    </location>
</feature>
<feature type="helix" evidence="2">
    <location>
        <begin position="15"/>
        <end position="37"/>
    </location>
</feature>
<accession>A6MVV3</accession>
<evidence type="ECO:0000255" key="1">
    <source>
        <dbReference type="HAMAP-Rule" id="MF_01317"/>
    </source>
</evidence>
<evidence type="ECO:0007829" key="2">
    <source>
        <dbReference type="PDB" id="8XLP"/>
    </source>
</evidence>
<reference key="1">
    <citation type="journal article" date="2007" name="Mol. Biol. Evol.">
        <title>Plastid genome sequence of the cryptophyte alga Rhodomonas salina CCMP1319: lateral transfer of putative DNA replication machinery and a test of chromist plastid phylogeny.</title>
        <authorList>
            <person name="Khan H."/>
            <person name="Parks N."/>
            <person name="Kozera C."/>
            <person name="Curtis B.A."/>
            <person name="Parsons B.J."/>
            <person name="Bowman S."/>
            <person name="Archibald J.M."/>
        </authorList>
    </citation>
    <scope>NUCLEOTIDE SEQUENCE [LARGE SCALE GENOMIC DNA]</scope>
    <source>
        <strain>CCMP1319 / NEPCC76 / CS-174</strain>
    </source>
</reference>
<gene>
    <name evidence="1" type="primary">psbL</name>
</gene>
<comment type="function">
    <text evidence="1">One of the components of the core complex of photosystem II (PSII). PSII is a light-driven water:plastoquinone oxidoreductase that uses light energy to abstract electrons from H(2)O, generating O(2) and a proton gradient subsequently used for ATP formation. It consists of a core antenna complex that captures photons, and an electron transfer chain that converts photonic excitation into a charge separation. This subunit is found at the monomer-monomer interface and is required for correct PSII assembly and/or dimerization.</text>
</comment>
<comment type="subunit">
    <text evidence="1">PSII is composed of 1 copy each of membrane proteins PsbA, PsbB, PsbC, PsbD, PsbE, PsbF, PsbH, PsbI, PsbJ, PsbK, PsbL, PsbM, PsbT, PsbX, PsbY, PsbZ, Psb30/Ycf12, at least 3 peripheral proteins of the oxygen-evolving complex and a large number of cofactors. It forms dimeric complexes.</text>
</comment>
<comment type="subcellular location">
    <subcellularLocation>
        <location evidence="1">Plastid</location>
        <location evidence="1">Chloroplast thylakoid membrane</location>
        <topology evidence="1">Single-pass membrane protein</topology>
    </subcellularLocation>
</comment>
<comment type="similarity">
    <text evidence="1">Belongs to the PsbL family.</text>
</comment>
<proteinExistence type="evidence at protein level"/>